<comment type="function">
    <text evidence="1">Plays a role in vesicular protein sorting. Component of the membrane-associated retromer complex which is essential in endosome-to-Golgi retrograde transport. Also involved in the efficient sorting of seed storage proteins (By similarity). The VPS29-VPS26-VPS35 subcomplex may be involved in recycling of specific cargos from endosome to the plasma membrane.</text>
</comment>
<comment type="subunit">
    <text>Component of the retromer complex which consists of VPS29 (MAG1), VPS26 (VPS26A or VPS26B), VPS35 (VPS35A or VPS35B or VPS35C), VPS5/17 (SNX1 or SNX2A or SNX2B). Component of a retromer subcomplex consisting of VPS29 (MAG1), VPS26 (VPS26A or VPS26B), VPS35 (VPS35A or VPS35B or VPS35C).</text>
</comment>
<comment type="subcellular location">
    <subcellularLocation>
        <location>Cytoplasm</location>
    </subcellularLocation>
    <subcellularLocation>
        <location>Endosome membrane</location>
        <topology>Peripheral membrane protein</topology>
        <orientation>Cytoplasmic side</orientation>
    </subcellularLocation>
    <subcellularLocation>
        <location>Prevacuolar compartment membrane</location>
        <topology>Peripheral membrane protein</topology>
        <orientation>Cytoplasmic side</orientation>
    </subcellularLocation>
    <subcellularLocation>
        <location evidence="1">Golgi apparatus</location>
        <location evidence="1">trans-Golgi network membrane</location>
        <topology evidence="1">Peripheral membrane protein</topology>
        <orientation evidence="1">Cytoplasmic side</orientation>
    </subcellularLocation>
</comment>
<comment type="similarity">
    <text evidence="3">Belongs to the VPS35 family.</text>
</comment>
<comment type="sequence caution" evidence="3">
    <conflict type="erroneous gene model prediction">
        <sequence resource="EMBL-CDS" id="CAB62653"/>
    </conflict>
</comment>
<dbReference type="EMBL" id="AB368490">
    <property type="protein sequence ID" value="BAF93445.1"/>
    <property type="molecule type" value="mRNA"/>
</dbReference>
<dbReference type="EMBL" id="AL132980">
    <property type="protein sequence ID" value="CAB62653.1"/>
    <property type="status" value="ALT_SEQ"/>
    <property type="molecule type" value="Genomic_DNA"/>
</dbReference>
<dbReference type="EMBL" id="CP002686">
    <property type="protein sequence ID" value="AEE78777.1"/>
    <property type="molecule type" value="Genomic_DNA"/>
</dbReference>
<dbReference type="PIR" id="T45762">
    <property type="entry name" value="T45762"/>
</dbReference>
<dbReference type="RefSeq" id="NP_190699.3">
    <property type="nucleotide sequence ID" value="NM_114990.5"/>
</dbReference>
<dbReference type="SMR" id="A8R7K9"/>
<dbReference type="FunCoup" id="A8R7K9">
    <property type="interactions" value="5161"/>
</dbReference>
<dbReference type="STRING" id="3702.A8R7K9"/>
<dbReference type="PaxDb" id="3702-AT3G51310.1"/>
<dbReference type="ProteomicsDB" id="242564"/>
<dbReference type="EnsemblPlants" id="AT3G51310.1">
    <property type="protein sequence ID" value="AT3G51310.1"/>
    <property type="gene ID" value="AT3G51310"/>
</dbReference>
<dbReference type="GeneID" id="824294"/>
<dbReference type="Gramene" id="AT3G51310.1">
    <property type="protein sequence ID" value="AT3G51310.1"/>
    <property type="gene ID" value="AT3G51310"/>
</dbReference>
<dbReference type="KEGG" id="ath:AT3G51310"/>
<dbReference type="Araport" id="AT3G51310"/>
<dbReference type="TAIR" id="AT3G51310">
    <property type="gene designation" value="VPS35C"/>
</dbReference>
<dbReference type="eggNOG" id="KOG1107">
    <property type="taxonomic scope" value="Eukaryota"/>
</dbReference>
<dbReference type="HOGENOM" id="CLU_005836_1_0_1"/>
<dbReference type="InParanoid" id="A8R7K9"/>
<dbReference type="OMA" id="YELYIRV"/>
<dbReference type="PhylomeDB" id="A8R7K9"/>
<dbReference type="PRO" id="PR:A8R7K9"/>
<dbReference type="Proteomes" id="UP000006548">
    <property type="component" value="Chromosome 3"/>
</dbReference>
<dbReference type="ExpressionAtlas" id="A8R7K9">
    <property type="expression patterns" value="baseline and differential"/>
</dbReference>
<dbReference type="GO" id="GO:0005829">
    <property type="term" value="C:cytosol"/>
    <property type="evidence" value="ECO:0007669"/>
    <property type="project" value="GOC"/>
</dbReference>
<dbReference type="GO" id="GO:0010008">
    <property type="term" value="C:endosome membrane"/>
    <property type="evidence" value="ECO:0007669"/>
    <property type="project" value="UniProtKB-SubCell"/>
</dbReference>
<dbReference type="GO" id="GO:0005794">
    <property type="term" value="C:Golgi apparatus"/>
    <property type="evidence" value="ECO:0007669"/>
    <property type="project" value="UniProtKB-SubCell"/>
</dbReference>
<dbReference type="GO" id="GO:0043231">
    <property type="term" value="C:intracellular membrane-bounded organelle"/>
    <property type="evidence" value="ECO:0000314"/>
    <property type="project" value="TAIR"/>
</dbReference>
<dbReference type="GO" id="GO:0016020">
    <property type="term" value="C:membrane"/>
    <property type="evidence" value="ECO:0000314"/>
    <property type="project" value="TAIR"/>
</dbReference>
<dbReference type="GO" id="GO:0005771">
    <property type="term" value="C:multivesicular body"/>
    <property type="evidence" value="ECO:0000314"/>
    <property type="project" value="TAIR"/>
</dbReference>
<dbReference type="GO" id="GO:0030904">
    <property type="term" value="C:retromer complex"/>
    <property type="evidence" value="ECO:0000314"/>
    <property type="project" value="TAIR"/>
</dbReference>
<dbReference type="GO" id="GO:0030906">
    <property type="term" value="C:retromer, cargo-selective complex"/>
    <property type="evidence" value="ECO:0007669"/>
    <property type="project" value="InterPro"/>
</dbReference>
<dbReference type="GO" id="GO:0015031">
    <property type="term" value="P:protein transport"/>
    <property type="evidence" value="ECO:0007669"/>
    <property type="project" value="UniProtKB-KW"/>
</dbReference>
<dbReference type="GO" id="GO:0042147">
    <property type="term" value="P:retrograde transport, endosome to Golgi"/>
    <property type="evidence" value="ECO:0007669"/>
    <property type="project" value="InterPro"/>
</dbReference>
<dbReference type="FunFam" id="1.25.40.660:FF:000003">
    <property type="entry name" value="Vacuolar protein sorting-associated protein 35"/>
    <property type="match status" value="1"/>
</dbReference>
<dbReference type="Gene3D" id="1.25.40.660">
    <property type="entry name" value="Vacuolar protein sorting-associated protein 35, helical subcomplex Vps35-C"/>
    <property type="match status" value="1"/>
</dbReference>
<dbReference type="InterPro" id="IPR005378">
    <property type="entry name" value="Vps35"/>
</dbReference>
<dbReference type="InterPro" id="IPR042491">
    <property type="entry name" value="Vps35_C"/>
</dbReference>
<dbReference type="PANTHER" id="PTHR11099:SF5">
    <property type="entry name" value="VACUOLAR PROTEIN SORTING-ASSOCIATED PROTEIN 35C"/>
    <property type="match status" value="1"/>
</dbReference>
<dbReference type="PANTHER" id="PTHR11099">
    <property type="entry name" value="VACUOLAR SORTING PROTEIN 35"/>
    <property type="match status" value="1"/>
</dbReference>
<dbReference type="Pfam" id="PF03635">
    <property type="entry name" value="Vps35"/>
    <property type="match status" value="1"/>
</dbReference>
<dbReference type="PIRSF" id="PIRSF009375">
    <property type="entry name" value="Retromer_Vps35"/>
    <property type="match status" value="1"/>
</dbReference>
<proteinExistence type="evidence at transcript level"/>
<reference key="1">
    <citation type="journal article" date="2008" name="Plant Cell Physiol.">
        <title>Arabidopsis VPS35, a retromer component, is required for vacuolar protein sorting and involved in plant growth and leaf senescence.</title>
        <authorList>
            <person name="Yamazaki M."/>
            <person name="Shimada T."/>
            <person name="Takahashi H."/>
            <person name="Tamura K."/>
            <person name="Kondo M."/>
            <person name="Nishimura M."/>
            <person name="Hara-Nishimura I."/>
        </authorList>
    </citation>
    <scope>NUCLEOTIDE SEQUENCE [MRNA]</scope>
    <scope>SUBCELLULAR LOCATION</scope>
</reference>
<reference key="2">
    <citation type="journal article" date="2000" name="Nature">
        <title>Sequence and analysis of chromosome 3 of the plant Arabidopsis thaliana.</title>
        <authorList>
            <person name="Salanoubat M."/>
            <person name="Lemcke K."/>
            <person name="Rieger M."/>
            <person name="Ansorge W."/>
            <person name="Unseld M."/>
            <person name="Fartmann B."/>
            <person name="Valle G."/>
            <person name="Bloecker H."/>
            <person name="Perez-Alonso M."/>
            <person name="Obermaier B."/>
            <person name="Delseny M."/>
            <person name="Boutry M."/>
            <person name="Grivell L.A."/>
            <person name="Mache R."/>
            <person name="Puigdomenech P."/>
            <person name="De Simone V."/>
            <person name="Choisne N."/>
            <person name="Artiguenave F."/>
            <person name="Robert C."/>
            <person name="Brottier P."/>
            <person name="Wincker P."/>
            <person name="Cattolico L."/>
            <person name="Weissenbach J."/>
            <person name="Saurin W."/>
            <person name="Quetier F."/>
            <person name="Schaefer M."/>
            <person name="Mueller-Auer S."/>
            <person name="Gabel C."/>
            <person name="Fuchs M."/>
            <person name="Benes V."/>
            <person name="Wurmbach E."/>
            <person name="Drzonek H."/>
            <person name="Erfle H."/>
            <person name="Jordan N."/>
            <person name="Bangert S."/>
            <person name="Wiedelmann R."/>
            <person name="Kranz H."/>
            <person name="Voss H."/>
            <person name="Holland R."/>
            <person name="Brandt P."/>
            <person name="Nyakatura G."/>
            <person name="Vezzi A."/>
            <person name="D'Angelo M."/>
            <person name="Pallavicini A."/>
            <person name="Toppo S."/>
            <person name="Simionati B."/>
            <person name="Conrad A."/>
            <person name="Hornischer K."/>
            <person name="Kauer G."/>
            <person name="Loehnert T.-H."/>
            <person name="Nordsiek G."/>
            <person name="Reichelt J."/>
            <person name="Scharfe M."/>
            <person name="Schoen O."/>
            <person name="Bargues M."/>
            <person name="Terol J."/>
            <person name="Climent J."/>
            <person name="Navarro P."/>
            <person name="Collado C."/>
            <person name="Perez-Perez A."/>
            <person name="Ottenwaelder B."/>
            <person name="Duchemin D."/>
            <person name="Cooke R."/>
            <person name="Laudie M."/>
            <person name="Berger-Llauro C."/>
            <person name="Purnelle B."/>
            <person name="Masuy D."/>
            <person name="de Haan M."/>
            <person name="Maarse A.C."/>
            <person name="Alcaraz J.-P."/>
            <person name="Cottet A."/>
            <person name="Casacuberta E."/>
            <person name="Monfort A."/>
            <person name="Argiriou A."/>
            <person name="Flores M."/>
            <person name="Liguori R."/>
            <person name="Vitale D."/>
            <person name="Mannhaupt G."/>
            <person name="Haase D."/>
            <person name="Schoof H."/>
            <person name="Rudd S."/>
            <person name="Zaccaria P."/>
            <person name="Mewes H.-W."/>
            <person name="Mayer K.F.X."/>
            <person name="Kaul S."/>
            <person name="Town C.D."/>
            <person name="Koo H.L."/>
            <person name="Tallon L.J."/>
            <person name="Jenkins J."/>
            <person name="Rooney T."/>
            <person name="Rizzo M."/>
            <person name="Walts A."/>
            <person name="Utterback T."/>
            <person name="Fujii C.Y."/>
            <person name="Shea T.P."/>
            <person name="Creasy T.H."/>
            <person name="Haas B."/>
            <person name="Maiti R."/>
            <person name="Wu D."/>
            <person name="Peterson J."/>
            <person name="Van Aken S."/>
            <person name="Pai G."/>
            <person name="Militscher J."/>
            <person name="Sellers P."/>
            <person name="Gill J.E."/>
            <person name="Feldblyum T.V."/>
            <person name="Preuss D."/>
            <person name="Lin X."/>
            <person name="Nierman W.C."/>
            <person name="Salzberg S.L."/>
            <person name="White O."/>
            <person name="Venter J.C."/>
            <person name="Fraser C.M."/>
            <person name="Kaneko T."/>
            <person name="Nakamura Y."/>
            <person name="Sato S."/>
            <person name="Kato T."/>
            <person name="Asamizu E."/>
            <person name="Sasamoto S."/>
            <person name="Kimura T."/>
            <person name="Idesawa K."/>
            <person name="Kawashima K."/>
            <person name="Kishida Y."/>
            <person name="Kiyokawa C."/>
            <person name="Kohara M."/>
            <person name="Matsumoto M."/>
            <person name="Matsuno A."/>
            <person name="Muraki A."/>
            <person name="Nakayama S."/>
            <person name="Nakazaki N."/>
            <person name="Shinpo S."/>
            <person name="Takeuchi C."/>
            <person name="Wada T."/>
            <person name="Watanabe A."/>
            <person name="Yamada M."/>
            <person name="Yasuda M."/>
            <person name="Tabata S."/>
        </authorList>
    </citation>
    <scope>NUCLEOTIDE SEQUENCE [LARGE SCALE GENOMIC DNA]</scope>
    <source>
        <strain>cv. Columbia</strain>
    </source>
</reference>
<reference key="3">
    <citation type="journal article" date="2017" name="Plant J.">
        <title>Araport11: a complete reannotation of the Arabidopsis thaliana reference genome.</title>
        <authorList>
            <person name="Cheng C.Y."/>
            <person name="Krishnakumar V."/>
            <person name="Chan A.P."/>
            <person name="Thibaud-Nissen F."/>
            <person name="Schobel S."/>
            <person name="Town C.D."/>
        </authorList>
    </citation>
    <scope>GENOME REANNOTATION</scope>
    <source>
        <strain>cv. Columbia</strain>
    </source>
</reference>
<reference key="4">
    <citation type="journal article" date="2006" name="Plant Cell">
        <title>Plant retromer, localized to the prevacuolar compartment and microvesicles in Arabidopsis, may interact with vacuolar sorting receptors.</title>
        <authorList>
            <person name="Oliviusson P."/>
            <person name="Heinzerling O."/>
            <person name="Hillmer S."/>
            <person name="Hinz G."/>
            <person name="Tse Y.C."/>
            <person name="Jiang L."/>
            <person name="Robinson D.G."/>
        </authorList>
    </citation>
    <scope>COMPONENT OF THE RETROMER COMPLEX</scope>
    <scope>SUBCELLULAR LOCATION</scope>
</reference>
<accession>A8R7K9</accession>
<accession>Q9SD18</accession>
<protein>
    <recommendedName>
        <fullName>Vacuolar protein sorting-associated protein 35C</fullName>
    </recommendedName>
    <alternativeName>
        <fullName>Vesicle protein sorting 35C</fullName>
    </alternativeName>
</protein>
<evidence type="ECO:0000250" key="1"/>
<evidence type="ECO:0000250" key="2">
    <source>
        <dbReference type="UniProtKB" id="Q7X659"/>
    </source>
</evidence>
<evidence type="ECO:0000305" key="3"/>
<name>VP35C_ARATH</name>
<feature type="chain" id="PRO_0000414726" description="Vacuolar protein sorting-associated protein 35C">
    <location>
        <begin position="1"/>
        <end position="790"/>
    </location>
</feature>
<feature type="modified residue" description="N-acetylmethionine" evidence="2">
    <location>
        <position position="1"/>
    </location>
</feature>
<keyword id="KW-0007">Acetylation</keyword>
<keyword id="KW-0963">Cytoplasm</keyword>
<keyword id="KW-0967">Endosome</keyword>
<keyword id="KW-0333">Golgi apparatus</keyword>
<keyword id="KW-0472">Membrane</keyword>
<keyword id="KW-0653">Protein transport</keyword>
<keyword id="KW-1185">Reference proteome</keyword>
<keyword id="KW-0813">Transport</keyword>
<sequence length="790" mass="89405">MIADDDEKWLAAAIAAVKQNAFYMQRAIDSNNLKDALKFSAQMLSELRTSKLSPHKYYELYMRVFNELGTLEIFFKEETGRGCSIAELYELVQHAGNILPRLYLLCTIGSVYIKSKDVTATDILKDLVEMCRAVQHPLRGLFLRSYLAQVTRDKLPSIGSDLEGDGDAHMNALEFVLQNFTEMNKLWVRMQHQGPSREKEKREKERNELRDLVGKNLHVLSQLEGVDLGIYRDTVLPRILEQVVNCKDELAQCYLMDCIIQVFPDDFHLQTLDVLLGACPQLQPSVDIKTVLSGLMERLSNYAASSVEALPNFLQVEAFSKLNYAIGKVVEAQADLPAAASVTLYLFLLKFTLHVYSDRLDYVDQVLGSCVTQLSATGKLCDDKAAKQIVAFLSAPLEKYNNVVTILKLTNYPLVMEYLDRETNKAMAIILVQSVFKNNTHIATADEVDALFELAKGLMKDFDGTIDDEIDEEDFQEEQNLVARLVNKLYIDDPEEMSKIIFTVRKHIVAGGPKRLPLTIPPLVFSALKLIRRLRGGDENPFGDDASATPKRILQLLSETVEVLSDVSAPDLALRLYLQCAQAANNCELETVAYEFFTKAYLLYEEEISDSKAQVTALRLIIGTLQRMRVFNVENRDTLTHKATGYSARLLRKPDQCRAVYECAHLFWADECENLKDGERVVLCLKRAQRIADAVQQMANASRGTSSTGSVSLYVELLNKYLYFLEKGNQQVTGDTIKSLAELIKSETKKVESGAEPFINSTLRYIEFQRQQEDGGMNEKYEKIKMEWFE</sequence>
<organism>
    <name type="scientific">Arabidopsis thaliana</name>
    <name type="common">Mouse-ear cress</name>
    <dbReference type="NCBI Taxonomy" id="3702"/>
    <lineage>
        <taxon>Eukaryota</taxon>
        <taxon>Viridiplantae</taxon>
        <taxon>Streptophyta</taxon>
        <taxon>Embryophyta</taxon>
        <taxon>Tracheophyta</taxon>
        <taxon>Spermatophyta</taxon>
        <taxon>Magnoliopsida</taxon>
        <taxon>eudicotyledons</taxon>
        <taxon>Gunneridae</taxon>
        <taxon>Pentapetalae</taxon>
        <taxon>rosids</taxon>
        <taxon>malvids</taxon>
        <taxon>Brassicales</taxon>
        <taxon>Brassicaceae</taxon>
        <taxon>Camelineae</taxon>
        <taxon>Arabidopsis</taxon>
    </lineage>
</organism>
<gene>
    <name type="primary">VPS35C</name>
    <name type="ordered locus">At3g51310</name>
    <name type="ORF">F24M12.350</name>
</gene>